<keyword id="KW-0028">Amino-acid biosynthesis</keyword>
<keyword id="KW-0055">Arginine biosynthesis</keyword>
<keyword id="KW-0963">Cytoplasm</keyword>
<keyword id="KW-1185">Reference proteome</keyword>
<keyword id="KW-0808">Transferase</keyword>
<protein>
    <recommendedName>
        <fullName evidence="2">Ornithine carbamoyltransferase</fullName>
        <shortName evidence="2">OTCase</shortName>
        <ecNumber evidence="2">2.1.3.3</ecNumber>
    </recommendedName>
</protein>
<organism>
    <name type="scientific">Thermosynechococcus vestitus (strain NIES-2133 / IAM M-273 / BP-1)</name>
    <dbReference type="NCBI Taxonomy" id="197221"/>
    <lineage>
        <taxon>Bacteria</taxon>
        <taxon>Bacillati</taxon>
        <taxon>Cyanobacteriota</taxon>
        <taxon>Cyanophyceae</taxon>
        <taxon>Acaryochloridales</taxon>
        <taxon>Thermosynechococcaceae</taxon>
        <taxon>Thermosynechococcus</taxon>
    </lineage>
</organism>
<name>OTC_THEVB</name>
<feature type="chain" id="PRO_0000113045" description="Ornithine carbamoyltransferase">
    <location>
        <begin position="1"/>
        <end position="310"/>
    </location>
</feature>
<feature type="binding site" evidence="2">
    <location>
        <begin position="57"/>
        <end position="60"/>
    </location>
    <ligand>
        <name>carbamoyl phosphate</name>
        <dbReference type="ChEBI" id="CHEBI:58228"/>
    </ligand>
</feature>
<feature type="binding site" evidence="2">
    <location>
        <position position="84"/>
    </location>
    <ligand>
        <name>carbamoyl phosphate</name>
        <dbReference type="ChEBI" id="CHEBI:58228"/>
    </ligand>
</feature>
<feature type="binding site" evidence="2">
    <location>
        <position position="108"/>
    </location>
    <ligand>
        <name>carbamoyl phosphate</name>
        <dbReference type="ChEBI" id="CHEBI:58228"/>
    </ligand>
</feature>
<feature type="binding site" evidence="2">
    <location>
        <begin position="135"/>
        <end position="138"/>
    </location>
    <ligand>
        <name>carbamoyl phosphate</name>
        <dbReference type="ChEBI" id="CHEBI:58228"/>
    </ligand>
</feature>
<feature type="binding site" evidence="2">
    <location>
        <position position="166"/>
    </location>
    <ligand>
        <name>L-ornithine</name>
        <dbReference type="ChEBI" id="CHEBI:46911"/>
    </ligand>
</feature>
<feature type="binding site" evidence="2">
    <location>
        <position position="229"/>
    </location>
    <ligand>
        <name>L-ornithine</name>
        <dbReference type="ChEBI" id="CHEBI:46911"/>
    </ligand>
</feature>
<feature type="binding site" evidence="2">
    <location>
        <begin position="233"/>
        <end position="234"/>
    </location>
    <ligand>
        <name>L-ornithine</name>
        <dbReference type="ChEBI" id="CHEBI:46911"/>
    </ligand>
</feature>
<feature type="binding site" evidence="2">
    <location>
        <begin position="269"/>
        <end position="270"/>
    </location>
    <ligand>
        <name>carbamoyl phosphate</name>
        <dbReference type="ChEBI" id="CHEBI:58228"/>
    </ligand>
</feature>
<feature type="binding site" evidence="2">
    <location>
        <position position="297"/>
    </location>
    <ligand>
        <name>carbamoyl phosphate</name>
        <dbReference type="ChEBI" id="CHEBI:58228"/>
    </ligand>
</feature>
<comment type="function">
    <text evidence="1">Reversibly catalyzes the transfer of the carbamoyl group from carbamoyl phosphate (CP) to the N(epsilon) atom of ornithine (ORN) to produce L-citrulline.</text>
</comment>
<comment type="catalytic activity">
    <reaction evidence="2">
        <text>carbamoyl phosphate + L-ornithine = L-citrulline + phosphate + H(+)</text>
        <dbReference type="Rhea" id="RHEA:19513"/>
        <dbReference type="ChEBI" id="CHEBI:15378"/>
        <dbReference type="ChEBI" id="CHEBI:43474"/>
        <dbReference type="ChEBI" id="CHEBI:46911"/>
        <dbReference type="ChEBI" id="CHEBI:57743"/>
        <dbReference type="ChEBI" id="CHEBI:58228"/>
        <dbReference type="EC" id="2.1.3.3"/>
    </reaction>
</comment>
<comment type="pathway">
    <text evidence="2">Amino-acid biosynthesis; L-arginine biosynthesis; L-arginine from L-ornithine and carbamoyl phosphate: step 1/3.</text>
</comment>
<comment type="subcellular location">
    <subcellularLocation>
        <location evidence="2">Cytoplasm</location>
    </subcellularLocation>
</comment>
<comment type="similarity">
    <text evidence="2">Belongs to the aspartate/ornithine carbamoyltransferase superfamily. OTCase family.</text>
</comment>
<reference key="1">
    <citation type="journal article" date="2002" name="DNA Res.">
        <title>Complete genome structure of the thermophilic cyanobacterium Thermosynechococcus elongatus BP-1.</title>
        <authorList>
            <person name="Nakamura Y."/>
            <person name="Kaneko T."/>
            <person name="Sato S."/>
            <person name="Ikeuchi M."/>
            <person name="Katoh H."/>
            <person name="Sasamoto S."/>
            <person name="Watanabe A."/>
            <person name="Iriguchi M."/>
            <person name="Kawashima K."/>
            <person name="Kimura T."/>
            <person name="Kishida Y."/>
            <person name="Kiyokawa C."/>
            <person name="Kohara M."/>
            <person name="Matsumoto M."/>
            <person name="Matsuno A."/>
            <person name="Nakazaki N."/>
            <person name="Shimpo S."/>
            <person name="Sugimoto M."/>
            <person name="Takeuchi C."/>
            <person name="Yamada M."/>
            <person name="Tabata S."/>
        </authorList>
    </citation>
    <scope>NUCLEOTIDE SEQUENCE [LARGE SCALE GENOMIC DNA]</scope>
    <source>
        <strain>NIES-2133 / IAM M-273 / BP-1</strain>
    </source>
</reference>
<dbReference type="EC" id="2.1.3.3" evidence="2"/>
<dbReference type="EMBL" id="BA000039">
    <property type="protein sequence ID" value="BAC08659.1"/>
    <property type="molecule type" value="Genomic_DNA"/>
</dbReference>
<dbReference type="RefSeq" id="NP_681897.1">
    <property type="nucleotide sequence ID" value="NC_004113.1"/>
</dbReference>
<dbReference type="SMR" id="Q8DJW4"/>
<dbReference type="STRING" id="197221.gene:10747702"/>
<dbReference type="EnsemblBacteria" id="BAC08659">
    <property type="protein sequence ID" value="BAC08659"/>
    <property type="gene ID" value="BAC08659"/>
</dbReference>
<dbReference type="KEGG" id="tel:tll1106"/>
<dbReference type="PATRIC" id="fig|197221.4.peg.1160"/>
<dbReference type="eggNOG" id="COG0078">
    <property type="taxonomic scope" value="Bacteria"/>
</dbReference>
<dbReference type="UniPathway" id="UPA00068">
    <property type="reaction ID" value="UER00112"/>
</dbReference>
<dbReference type="Proteomes" id="UP000000440">
    <property type="component" value="Chromosome"/>
</dbReference>
<dbReference type="GO" id="GO:0005737">
    <property type="term" value="C:cytoplasm"/>
    <property type="evidence" value="ECO:0007669"/>
    <property type="project" value="UniProtKB-SubCell"/>
</dbReference>
<dbReference type="GO" id="GO:0016597">
    <property type="term" value="F:amino acid binding"/>
    <property type="evidence" value="ECO:0007669"/>
    <property type="project" value="InterPro"/>
</dbReference>
<dbReference type="GO" id="GO:0004585">
    <property type="term" value="F:ornithine carbamoyltransferase activity"/>
    <property type="evidence" value="ECO:0007669"/>
    <property type="project" value="UniProtKB-UniRule"/>
</dbReference>
<dbReference type="GO" id="GO:0042450">
    <property type="term" value="P:arginine biosynthetic process via ornithine"/>
    <property type="evidence" value="ECO:0007669"/>
    <property type="project" value="TreeGrafter"/>
</dbReference>
<dbReference type="GO" id="GO:0019240">
    <property type="term" value="P:citrulline biosynthetic process"/>
    <property type="evidence" value="ECO:0007669"/>
    <property type="project" value="TreeGrafter"/>
</dbReference>
<dbReference type="GO" id="GO:0006526">
    <property type="term" value="P:L-arginine biosynthetic process"/>
    <property type="evidence" value="ECO:0007669"/>
    <property type="project" value="UniProtKB-UniRule"/>
</dbReference>
<dbReference type="FunFam" id="3.40.50.1370:FF:000008">
    <property type="entry name" value="Ornithine carbamoyltransferase"/>
    <property type="match status" value="1"/>
</dbReference>
<dbReference type="Gene3D" id="3.40.50.1370">
    <property type="entry name" value="Aspartate/ornithine carbamoyltransferase"/>
    <property type="match status" value="2"/>
</dbReference>
<dbReference type="HAMAP" id="MF_01109">
    <property type="entry name" value="OTCase"/>
    <property type="match status" value="1"/>
</dbReference>
<dbReference type="InterPro" id="IPR006132">
    <property type="entry name" value="Asp/Orn_carbamoyltranf_P-bd"/>
</dbReference>
<dbReference type="InterPro" id="IPR006130">
    <property type="entry name" value="Asp/Orn_carbamoylTrfase"/>
</dbReference>
<dbReference type="InterPro" id="IPR036901">
    <property type="entry name" value="Asp/Orn_carbamoylTrfase_sf"/>
</dbReference>
<dbReference type="InterPro" id="IPR006131">
    <property type="entry name" value="Asp_carbamoyltransf_Asp/Orn-bd"/>
</dbReference>
<dbReference type="InterPro" id="IPR002292">
    <property type="entry name" value="Orn/put_carbamltrans"/>
</dbReference>
<dbReference type="InterPro" id="IPR024904">
    <property type="entry name" value="OTCase_ArgI"/>
</dbReference>
<dbReference type="NCBIfam" id="TIGR00658">
    <property type="entry name" value="orni_carb_tr"/>
    <property type="match status" value="1"/>
</dbReference>
<dbReference type="NCBIfam" id="NF001986">
    <property type="entry name" value="PRK00779.1"/>
    <property type="match status" value="1"/>
</dbReference>
<dbReference type="PANTHER" id="PTHR45753">
    <property type="entry name" value="ORNITHINE CARBAMOYLTRANSFERASE, MITOCHONDRIAL"/>
    <property type="match status" value="1"/>
</dbReference>
<dbReference type="PANTHER" id="PTHR45753:SF3">
    <property type="entry name" value="ORNITHINE TRANSCARBAMYLASE, MITOCHONDRIAL"/>
    <property type="match status" value="1"/>
</dbReference>
<dbReference type="Pfam" id="PF00185">
    <property type="entry name" value="OTCace"/>
    <property type="match status" value="1"/>
</dbReference>
<dbReference type="Pfam" id="PF02729">
    <property type="entry name" value="OTCace_N"/>
    <property type="match status" value="1"/>
</dbReference>
<dbReference type="PRINTS" id="PR00100">
    <property type="entry name" value="AOTCASE"/>
</dbReference>
<dbReference type="PRINTS" id="PR00102">
    <property type="entry name" value="OTCASE"/>
</dbReference>
<dbReference type="SUPFAM" id="SSF53671">
    <property type="entry name" value="Aspartate/ornithine carbamoyltransferase"/>
    <property type="match status" value="1"/>
</dbReference>
<dbReference type="PROSITE" id="PS00097">
    <property type="entry name" value="CARBAMOYLTRANSFERASE"/>
    <property type="match status" value="1"/>
</dbReference>
<gene>
    <name evidence="2" type="primary">argF</name>
    <name type="ordered locus">tll1106</name>
</gene>
<accession>Q8DJW4</accession>
<sequence>MVGRFVMETLRGRDLLSIADLSRAEAEYLLDLAAQMKIGKVAPQCPKVLGLLFQKASTRTRVSFTVAMYQLGGQVIDLNPQSTQVGRGEPLTDTARVLDRYLDAVAIRTYGQAELQLFADYARIPVINALTDREHPCQILADLLTLRESFGTLAGLTLCYIGDGNNVAHSLLLGCALLGVNIRVASPPQFAPLADIVAQAKALSGGKSEVAVLTDPQAAAKGAHALYTDVWASMGQEAEAGDRQPIFQPYQINDHLLALADPRAIVLHCLPAHRDEEITASVLEGPQSRVWEQAENRLHVQKALLASLLV</sequence>
<proteinExistence type="inferred from homology"/>
<evidence type="ECO:0000250" key="1"/>
<evidence type="ECO:0000255" key="2">
    <source>
        <dbReference type="HAMAP-Rule" id="MF_01109"/>
    </source>
</evidence>